<evidence type="ECO:0000255" key="1">
    <source>
        <dbReference type="HAMAP-Rule" id="MF_01320"/>
    </source>
</evidence>
<evidence type="ECO:0000256" key="2">
    <source>
        <dbReference type="SAM" id="MobiDB-lite"/>
    </source>
</evidence>
<evidence type="ECO:0000305" key="3"/>
<gene>
    <name evidence="1" type="primary">rplB</name>
    <name type="ordered locus">Smed_0989</name>
</gene>
<organism>
    <name type="scientific">Sinorhizobium medicae (strain WSM419)</name>
    <name type="common">Ensifer medicae</name>
    <dbReference type="NCBI Taxonomy" id="366394"/>
    <lineage>
        <taxon>Bacteria</taxon>
        <taxon>Pseudomonadati</taxon>
        <taxon>Pseudomonadota</taxon>
        <taxon>Alphaproteobacteria</taxon>
        <taxon>Hyphomicrobiales</taxon>
        <taxon>Rhizobiaceae</taxon>
        <taxon>Sinorhizobium/Ensifer group</taxon>
        <taxon>Sinorhizobium</taxon>
    </lineage>
</organism>
<reference key="1">
    <citation type="submission" date="2007-06" db="EMBL/GenBank/DDBJ databases">
        <title>Complete sequence of Sinorhizobium medicae WSM419 chromosome.</title>
        <authorList>
            <consortium name="US DOE Joint Genome Institute"/>
            <person name="Copeland A."/>
            <person name="Lucas S."/>
            <person name="Lapidus A."/>
            <person name="Barry K."/>
            <person name="Glavina del Rio T."/>
            <person name="Dalin E."/>
            <person name="Tice H."/>
            <person name="Pitluck S."/>
            <person name="Chain P."/>
            <person name="Malfatti S."/>
            <person name="Shin M."/>
            <person name="Vergez L."/>
            <person name="Schmutz J."/>
            <person name="Larimer F."/>
            <person name="Land M."/>
            <person name="Hauser L."/>
            <person name="Kyrpides N."/>
            <person name="Mikhailova N."/>
            <person name="Reeve W.G."/>
            <person name="Richardson P."/>
        </authorList>
    </citation>
    <scope>NUCLEOTIDE SEQUENCE [LARGE SCALE GENOMIC DNA]</scope>
    <source>
        <strain>WSM419</strain>
    </source>
</reference>
<accession>A6U862</accession>
<comment type="function">
    <text evidence="1">One of the primary rRNA binding proteins. Required for association of the 30S and 50S subunits to form the 70S ribosome, for tRNA binding and peptide bond formation. It has been suggested to have peptidyltransferase activity; this is somewhat controversial. Makes several contacts with the 16S rRNA in the 70S ribosome.</text>
</comment>
<comment type="subunit">
    <text evidence="1">Part of the 50S ribosomal subunit. Forms a bridge to the 30S subunit in the 70S ribosome.</text>
</comment>
<comment type="similarity">
    <text evidence="1">Belongs to the universal ribosomal protein uL2 family.</text>
</comment>
<sequence length="278" mass="30397">MALKSFNPTTPSQRQLVIVSRAGLYKGKPVKTLTEGLSSKGGRNNLGRITVRFQGGGHKRTYRLVDFKRRKFDVEGTVERLEYDPNRTAFIALVNYADGEQAYILAPQRLAVGDKVIASEKAVDVKPGNAMPLQFIPVGSIIHNVEMKPGKGGQIARSAGTYAQLVGRDQGMAILRLNSGEQRLVHGSCLASIGAVSNPDHGNINDGKAGRSRWRGKRPHVRGVVMNPVDHPHGGGEGRTSGGRHPVTPWGKPTKGKRTRSNKSTDKFIMRSRHQRKK</sequence>
<keyword id="KW-0687">Ribonucleoprotein</keyword>
<keyword id="KW-0689">Ribosomal protein</keyword>
<keyword id="KW-0694">RNA-binding</keyword>
<keyword id="KW-0699">rRNA-binding</keyword>
<protein>
    <recommendedName>
        <fullName evidence="1">Large ribosomal subunit protein uL2</fullName>
    </recommendedName>
    <alternativeName>
        <fullName evidence="3">50S ribosomal protein L2</fullName>
    </alternativeName>
</protein>
<feature type="chain" id="PRO_1000051953" description="Large ribosomal subunit protein uL2">
    <location>
        <begin position="1"/>
        <end position="278"/>
    </location>
</feature>
<feature type="region of interest" description="Disordered" evidence="2">
    <location>
        <begin position="201"/>
        <end position="278"/>
    </location>
</feature>
<feature type="compositionally biased region" description="Basic residues" evidence="2">
    <location>
        <begin position="210"/>
        <end position="221"/>
    </location>
</feature>
<dbReference type="EMBL" id="CP000738">
    <property type="protein sequence ID" value="ABR59842.1"/>
    <property type="molecule type" value="Genomic_DNA"/>
</dbReference>
<dbReference type="RefSeq" id="WP_003536619.1">
    <property type="nucleotide sequence ID" value="NC_009636.1"/>
</dbReference>
<dbReference type="RefSeq" id="YP_001326677.1">
    <property type="nucleotide sequence ID" value="NC_009636.1"/>
</dbReference>
<dbReference type="SMR" id="A6U862"/>
<dbReference type="STRING" id="366394.Smed_0989"/>
<dbReference type="GeneID" id="61614927"/>
<dbReference type="KEGG" id="smd:Smed_0989"/>
<dbReference type="PATRIC" id="fig|366394.8.peg.4110"/>
<dbReference type="eggNOG" id="COG0090">
    <property type="taxonomic scope" value="Bacteria"/>
</dbReference>
<dbReference type="HOGENOM" id="CLU_036235_2_1_5"/>
<dbReference type="OrthoDB" id="9778722at2"/>
<dbReference type="Proteomes" id="UP000001108">
    <property type="component" value="Chromosome"/>
</dbReference>
<dbReference type="GO" id="GO:0015934">
    <property type="term" value="C:large ribosomal subunit"/>
    <property type="evidence" value="ECO:0007669"/>
    <property type="project" value="InterPro"/>
</dbReference>
<dbReference type="GO" id="GO:0019843">
    <property type="term" value="F:rRNA binding"/>
    <property type="evidence" value="ECO:0007669"/>
    <property type="project" value="UniProtKB-UniRule"/>
</dbReference>
<dbReference type="GO" id="GO:0003735">
    <property type="term" value="F:structural constituent of ribosome"/>
    <property type="evidence" value="ECO:0007669"/>
    <property type="project" value="InterPro"/>
</dbReference>
<dbReference type="GO" id="GO:0016740">
    <property type="term" value="F:transferase activity"/>
    <property type="evidence" value="ECO:0007669"/>
    <property type="project" value="InterPro"/>
</dbReference>
<dbReference type="GO" id="GO:0002181">
    <property type="term" value="P:cytoplasmic translation"/>
    <property type="evidence" value="ECO:0007669"/>
    <property type="project" value="TreeGrafter"/>
</dbReference>
<dbReference type="FunFam" id="2.30.30.30:FF:000001">
    <property type="entry name" value="50S ribosomal protein L2"/>
    <property type="match status" value="1"/>
</dbReference>
<dbReference type="FunFam" id="2.40.50.140:FF:000003">
    <property type="entry name" value="50S ribosomal protein L2"/>
    <property type="match status" value="1"/>
</dbReference>
<dbReference type="FunFam" id="4.10.950.10:FF:000001">
    <property type="entry name" value="50S ribosomal protein L2"/>
    <property type="match status" value="1"/>
</dbReference>
<dbReference type="Gene3D" id="2.30.30.30">
    <property type="match status" value="1"/>
</dbReference>
<dbReference type="Gene3D" id="2.40.50.140">
    <property type="entry name" value="Nucleic acid-binding proteins"/>
    <property type="match status" value="1"/>
</dbReference>
<dbReference type="Gene3D" id="4.10.950.10">
    <property type="entry name" value="Ribosomal protein L2, domain 3"/>
    <property type="match status" value="1"/>
</dbReference>
<dbReference type="HAMAP" id="MF_01320_B">
    <property type="entry name" value="Ribosomal_uL2_B"/>
    <property type="match status" value="1"/>
</dbReference>
<dbReference type="InterPro" id="IPR012340">
    <property type="entry name" value="NA-bd_OB-fold"/>
</dbReference>
<dbReference type="InterPro" id="IPR014722">
    <property type="entry name" value="Rib_uL2_dom2"/>
</dbReference>
<dbReference type="InterPro" id="IPR002171">
    <property type="entry name" value="Ribosomal_uL2"/>
</dbReference>
<dbReference type="InterPro" id="IPR005880">
    <property type="entry name" value="Ribosomal_uL2_bac/org-type"/>
</dbReference>
<dbReference type="InterPro" id="IPR022669">
    <property type="entry name" value="Ribosomal_uL2_C"/>
</dbReference>
<dbReference type="InterPro" id="IPR022671">
    <property type="entry name" value="Ribosomal_uL2_CS"/>
</dbReference>
<dbReference type="InterPro" id="IPR014726">
    <property type="entry name" value="Ribosomal_uL2_dom3"/>
</dbReference>
<dbReference type="InterPro" id="IPR022666">
    <property type="entry name" value="Ribosomal_uL2_RNA-bd_dom"/>
</dbReference>
<dbReference type="InterPro" id="IPR008991">
    <property type="entry name" value="Translation_prot_SH3-like_sf"/>
</dbReference>
<dbReference type="NCBIfam" id="TIGR01171">
    <property type="entry name" value="rplB_bact"/>
    <property type="match status" value="1"/>
</dbReference>
<dbReference type="PANTHER" id="PTHR13691:SF5">
    <property type="entry name" value="LARGE RIBOSOMAL SUBUNIT PROTEIN UL2M"/>
    <property type="match status" value="1"/>
</dbReference>
<dbReference type="PANTHER" id="PTHR13691">
    <property type="entry name" value="RIBOSOMAL PROTEIN L2"/>
    <property type="match status" value="1"/>
</dbReference>
<dbReference type="Pfam" id="PF00181">
    <property type="entry name" value="Ribosomal_L2"/>
    <property type="match status" value="1"/>
</dbReference>
<dbReference type="Pfam" id="PF03947">
    <property type="entry name" value="Ribosomal_L2_C"/>
    <property type="match status" value="1"/>
</dbReference>
<dbReference type="PIRSF" id="PIRSF002158">
    <property type="entry name" value="Ribosomal_L2"/>
    <property type="match status" value="1"/>
</dbReference>
<dbReference type="SMART" id="SM01383">
    <property type="entry name" value="Ribosomal_L2"/>
    <property type="match status" value="1"/>
</dbReference>
<dbReference type="SMART" id="SM01382">
    <property type="entry name" value="Ribosomal_L2_C"/>
    <property type="match status" value="1"/>
</dbReference>
<dbReference type="SUPFAM" id="SSF50249">
    <property type="entry name" value="Nucleic acid-binding proteins"/>
    <property type="match status" value="1"/>
</dbReference>
<dbReference type="SUPFAM" id="SSF50104">
    <property type="entry name" value="Translation proteins SH3-like domain"/>
    <property type="match status" value="1"/>
</dbReference>
<dbReference type="PROSITE" id="PS00467">
    <property type="entry name" value="RIBOSOMAL_L2"/>
    <property type="match status" value="1"/>
</dbReference>
<name>RL2_SINMW</name>
<proteinExistence type="inferred from homology"/>